<keyword id="KW-0028">Amino-acid biosynthesis</keyword>
<keyword id="KW-0963">Cytoplasm</keyword>
<keyword id="KW-0368">Histidine biosynthesis</keyword>
<keyword id="KW-0456">Lyase</keyword>
<keyword id="KW-1185">Reference proteome</keyword>
<sequence length="260" mass="27785">MLKRRIIPCLDVTAGRVVKGVQFLDLRDAGDPVELAARYDAEGADELVFLDITASAEGRETMVEVVRRTAKEVFIPLTVGGGVRTPADMYRLLRAGADKVSVNTAAVLDPDLIRVCAQRFGSQCVVLAIDARRRPEGGWEVYTHGGRRPTGLDVIEWAKQGVSLGAGEILLTSMDTDGTQQGYDLALLRAVVDAVGVPVIASGGAGTLEHLYQALTMGGAHAVLAASIFHFGRYSVAEAKRYLAARGVPVRHVSVEFTPS</sequence>
<gene>
    <name evidence="1" type="primary">hisF</name>
    <name type="ordered locus">trd_0183</name>
</gene>
<comment type="function">
    <text evidence="1">IGPS catalyzes the conversion of PRFAR and glutamine to IGP, AICAR and glutamate. The HisF subunit catalyzes the cyclization activity that produces IGP and AICAR from PRFAR using the ammonia provided by the HisH subunit.</text>
</comment>
<comment type="catalytic activity">
    <reaction evidence="1">
        <text>5-[(5-phospho-1-deoxy-D-ribulos-1-ylimino)methylamino]-1-(5-phospho-beta-D-ribosyl)imidazole-4-carboxamide + L-glutamine = D-erythro-1-(imidazol-4-yl)glycerol 3-phosphate + 5-amino-1-(5-phospho-beta-D-ribosyl)imidazole-4-carboxamide + L-glutamate + H(+)</text>
        <dbReference type="Rhea" id="RHEA:24793"/>
        <dbReference type="ChEBI" id="CHEBI:15378"/>
        <dbReference type="ChEBI" id="CHEBI:29985"/>
        <dbReference type="ChEBI" id="CHEBI:58278"/>
        <dbReference type="ChEBI" id="CHEBI:58359"/>
        <dbReference type="ChEBI" id="CHEBI:58475"/>
        <dbReference type="ChEBI" id="CHEBI:58525"/>
        <dbReference type="EC" id="4.3.2.10"/>
    </reaction>
</comment>
<comment type="pathway">
    <text evidence="1">Amino-acid biosynthesis; L-histidine biosynthesis; L-histidine from 5-phospho-alpha-D-ribose 1-diphosphate: step 5/9.</text>
</comment>
<comment type="subunit">
    <text evidence="1">Heterodimer of HisH and HisF.</text>
</comment>
<comment type="subcellular location">
    <subcellularLocation>
        <location evidence="1">Cytoplasm</location>
    </subcellularLocation>
</comment>
<comment type="similarity">
    <text evidence="1">Belongs to the HisA/HisF family.</text>
</comment>
<dbReference type="EC" id="4.3.2.10" evidence="1"/>
<dbReference type="EMBL" id="CP001275">
    <property type="protein sequence ID" value="ACM05847.1"/>
    <property type="molecule type" value="Genomic_DNA"/>
</dbReference>
<dbReference type="RefSeq" id="WP_012641596.1">
    <property type="nucleotide sequence ID" value="NC_011959.1"/>
</dbReference>
<dbReference type="SMR" id="B9KXJ6"/>
<dbReference type="STRING" id="309801.trd_0183"/>
<dbReference type="KEGG" id="tro:trd_0183"/>
<dbReference type="eggNOG" id="COG0107">
    <property type="taxonomic scope" value="Bacteria"/>
</dbReference>
<dbReference type="HOGENOM" id="CLU_048577_4_0_0"/>
<dbReference type="OrthoDB" id="9781903at2"/>
<dbReference type="UniPathway" id="UPA00031">
    <property type="reaction ID" value="UER00010"/>
</dbReference>
<dbReference type="Proteomes" id="UP000000447">
    <property type="component" value="Chromosome"/>
</dbReference>
<dbReference type="GO" id="GO:0005737">
    <property type="term" value="C:cytoplasm"/>
    <property type="evidence" value="ECO:0007669"/>
    <property type="project" value="UniProtKB-SubCell"/>
</dbReference>
<dbReference type="GO" id="GO:0000107">
    <property type="term" value="F:imidazoleglycerol-phosphate synthase activity"/>
    <property type="evidence" value="ECO:0007669"/>
    <property type="project" value="UniProtKB-UniRule"/>
</dbReference>
<dbReference type="GO" id="GO:0016829">
    <property type="term" value="F:lyase activity"/>
    <property type="evidence" value="ECO:0007669"/>
    <property type="project" value="UniProtKB-KW"/>
</dbReference>
<dbReference type="GO" id="GO:0000105">
    <property type="term" value="P:L-histidine biosynthetic process"/>
    <property type="evidence" value="ECO:0007669"/>
    <property type="project" value="UniProtKB-UniRule"/>
</dbReference>
<dbReference type="CDD" id="cd04731">
    <property type="entry name" value="HisF"/>
    <property type="match status" value="1"/>
</dbReference>
<dbReference type="FunFam" id="3.20.20.70:FF:000006">
    <property type="entry name" value="Imidazole glycerol phosphate synthase subunit HisF"/>
    <property type="match status" value="1"/>
</dbReference>
<dbReference type="Gene3D" id="3.20.20.70">
    <property type="entry name" value="Aldolase class I"/>
    <property type="match status" value="1"/>
</dbReference>
<dbReference type="HAMAP" id="MF_01013">
    <property type="entry name" value="HisF"/>
    <property type="match status" value="1"/>
</dbReference>
<dbReference type="InterPro" id="IPR013785">
    <property type="entry name" value="Aldolase_TIM"/>
</dbReference>
<dbReference type="InterPro" id="IPR006062">
    <property type="entry name" value="His_biosynth"/>
</dbReference>
<dbReference type="InterPro" id="IPR004651">
    <property type="entry name" value="HisF"/>
</dbReference>
<dbReference type="InterPro" id="IPR050064">
    <property type="entry name" value="IGPS_HisA/HisF"/>
</dbReference>
<dbReference type="InterPro" id="IPR011060">
    <property type="entry name" value="RibuloseP-bd_barrel"/>
</dbReference>
<dbReference type="NCBIfam" id="TIGR00735">
    <property type="entry name" value="hisF"/>
    <property type="match status" value="1"/>
</dbReference>
<dbReference type="PANTHER" id="PTHR21235:SF2">
    <property type="entry name" value="IMIDAZOLE GLYCEROL PHOSPHATE SYNTHASE HISHF"/>
    <property type="match status" value="1"/>
</dbReference>
<dbReference type="PANTHER" id="PTHR21235">
    <property type="entry name" value="IMIDAZOLE GLYCEROL PHOSPHATE SYNTHASE SUBUNIT HISF/H IGP SYNTHASE SUBUNIT HISF/H"/>
    <property type="match status" value="1"/>
</dbReference>
<dbReference type="Pfam" id="PF00977">
    <property type="entry name" value="His_biosynth"/>
    <property type="match status" value="1"/>
</dbReference>
<dbReference type="SUPFAM" id="SSF51366">
    <property type="entry name" value="Ribulose-phoshate binding barrel"/>
    <property type="match status" value="1"/>
</dbReference>
<name>HIS6_THERP</name>
<organism>
    <name type="scientific">Thermomicrobium roseum (strain ATCC 27502 / DSM 5159 / P-2)</name>
    <dbReference type="NCBI Taxonomy" id="309801"/>
    <lineage>
        <taxon>Bacteria</taxon>
        <taxon>Pseudomonadati</taxon>
        <taxon>Thermomicrobiota</taxon>
        <taxon>Thermomicrobia</taxon>
        <taxon>Thermomicrobiales</taxon>
        <taxon>Thermomicrobiaceae</taxon>
        <taxon>Thermomicrobium</taxon>
    </lineage>
</organism>
<protein>
    <recommendedName>
        <fullName evidence="1">Imidazole glycerol phosphate synthase subunit HisF</fullName>
        <ecNumber evidence="1">4.3.2.10</ecNumber>
    </recommendedName>
    <alternativeName>
        <fullName evidence="1">IGP synthase cyclase subunit</fullName>
    </alternativeName>
    <alternativeName>
        <fullName evidence="1">IGP synthase subunit HisF</fullName>
    </alternativeName>
    <alternativeName>
        <fullName evidence="1">ImGP synthase subunit HisF</fullName>
        <shortName evidence="1">IGPS subunit HisF</shortName>
    </alternativeName>
</protein>
<reference key="1">
    <citation type="journal article" date="2009" name="PLoS ONE">
        <title>Complete genome sequence of the aerobic CO-oxidizing thermophile Thermomicrobium roseum.</title>
        <authorList>
            <person name="Wu D."/>
            <person name="Raymond J."/>
            <person name="Wu M."/>
            <person name="Chatterji S."/>
            <person name="Ren Q."/>
            <person name="Graham J.E."/>
            <person name="Bryant D.A."/>
            <person name="Robb F."/>
            <person name="Colman A."/>
            <person name="Tallon L.J."/>
            <person name="Badger J.H."/>
            <person name="Madupu R."/>
            <person name="Ward N.L."/>
            <person name="Eisen J.A."/>
        </authorList>
    </citation>
    <scope>NUCLEOTIDE SEQUENCE [LARGE SCALE GENOMIC DNA]</scope>
    <source>
        <strain>ATCC 27502 / DSM 5159 / P-2</strain>
    </source>
</reference>
<accession>B9KXJ6</accession>
<evidence type="ECO:0000255" key="1">
    <source>
        <dbReference type="HAMAP-Rule" id="MF_01013"/>
    </source>
</evidence>
<proteinExistence type="inferred from homology"/>
<feature type="chain" id="PRO_1000148941" description="Imidazole glycerol phosphate synthase subunit HisF">
    <location>
        <begin position="1"/>
        <end position="260"/>
    </location>
</feature>
<feature type="active site" evidence="1">
    <location>
        <position position="11"/>
    </location>
</feature>
<feature type="active site" evidence="1">
    <location>
        <position position="130"/>
    </location>
</feature>